<reference evidence="5" key="1">
    <citation type="submission" date="2010-11" db="UniProtKB">
        <title>Characterization and identification of a Cannabis sativa allergen.</title>
        <authorList>
            <person name="Carnes J."/>
            <person name="Lopez-Matas M.A."/>
            <person name="Larramendi C.H."/>
            <person name="Ferrer A."/>
            <person name="Huertas A.J."/>
        </authorList>
    </citation>
    <scope>PROTEIN SEQUENCE</scope>
    <scope>TISSUE SPECIFICITY</scope>
    <scope>ALLERGEN</scope>
    <source>
        <tissue evidence="3">Leaf</tissue>
    </source>
</reference>
<protein>
    <recommendedName>
        <fullName>Non-specific lipid-transfer protein</fullName>
        <shortName>LTP</shortName>
    </recommendedName>
    <allergenName>Can s 3</allergenName>
</protein>
<sequence length="20" mass="2099">KCGVSIPYKISPSTDCSSVK</sequence>
<dbReference type="Allergome" id="4008">
    <property type="allergen name" value="Can s 3"/>
</dbReference>
<dbReference type="Proteomes" id="UP000596661">
    <property type="component" value="Unplaced"/>
</dbReference>
<dbReference type="GO" id="GO:0008289">
    <property type="term" value="F:lipid binding"/>
    <property type="evidence" value="ECO:0007669"/>
    <property type="project" value="UniProtKB-KW"/>
</dbReference>
<dbReference type="Gene3D" id="1.10.110.10">
    <property type="entry name" value="Plant lipid-transfer and hydrophobic proteins"/>
    <property type="match status" value="1"/>
</dbReference>
<dbReference type="InterPro" id="IPR036312">
    <property type="entry name" value="Bifun_inhib/LTP/seed_sf"/>
</dbReference>
<proteinExistence type="evidence at protein level"/>
<keyword id="KW-0020">Allergen</keyword>
<keyword id="KW-0903">Direct protein sequencing</keyword>
<keyword id="KW-0446">Lipid-binding</keyword>
<keyword id="KW-0813">Transport</keyword>
<evidence type="ECO:0000250" key="1">
    <source>
        <dbReference type="UniProtKB" id="P81402"/>
    </source>
</evidence>
<evidence type="ECO:0000255" key="2"/>
<evidence type="ECO:0000269" key="3">
    <source ref="1"/>
</evidence>
<evidence type="ECO:0000303" key="4">
    <source ref="1"/>
</evidence>
<evidence type="ECO:0000305" key="5"/>
<name>NLTP_CANSA</name>
<accession>P86838</accession>
<organism>
    <name type="scientific">Cannabis sativa</name>
    <name type="common">Hemp</name>
    <name type="synonym">Marijuana</name>
    <dbReference type="NCBI Taxonomy" id="3483"/>
    <lineage>
        <taxon>Eukaryota</taxon>
        <taxon>Viridiplantae</taxon>
        <taxon>Streptophyta</taxon>
        <taxon>Embryophyta</taxon>
        <taxon>Tracheophyta</taxon>
        <taxon>Spermatophyta</taxon>
        <taxon>Magnoliopsida</taxon>
        <taxon>eudicotyledons</taxon>
        <taxon>Gunneridae</taxon>
        <taxon>Pentapetalae</taxon>
        <taxon>rosids</taxon>
        <taxon>fabids</taxon>
        <taxon>Rosales</taxon>
        <taxon>Cannabaceae</taxon>
        <taxon>Cannabis</taxon>
    </lineage>
</organism>
<comment type="function">
    <text evidence="1">Plant non-specific lipid-transfer proteins transfer phospholipids as well as galactolipids across membranes. May play a role in wax or cutin deposition in the cell walls of expanding epidermal cells and certain secretory tissues (By similarity).</text>
</comment>
<comment type="tissue specificity">
    <text evidence="3">Leaf.</text>
</comment>
<comment type="allergen">
    <text evidence="3">Causes an allergic reaction in human.</text>
</comment>
<comment type="similarity">
    <text evidence="2">Belongs to the plant LTP family.</text>
</comment>
<feature type="chain" id="PRO_0000403476" description="Non-specific lipid-transfer protein">
    <location>
        <begin position="1" status="less than"/>
        <end position="20" status="greater than"/>
    </location>
</feature>
<feature type="non-terminal residue" evidence="4">
    <location>
        <position position="1"/>
    </location>
</feature>
<feature type="non-terminal residue" evidence="4">
    <location>
        <position position="20"/>
    </location>
</feature>